<sequence>MGIRKYKPTTPGRRGSSVADFAEITRSTPEKSLLRPLHKTGGRNNSGKITTRHKGGGHKRQYRLIDFRRHDKDGINARVAEIEYDPNRTARIALLHYVDGTKRYIIAPNKLSQGDFVEAGPDADIKPGNNLPLRNIPVGTVIHAVELRPGGGAKMARSAGASVQLVAKEGRFAQLRLPSGEIRNVDVRCRATVGEVGNAEQSNINWGKAGRMRWKGVRPTVRGVAMNPVDHPHGGGEGKTSGGRHPVNPNGKPEGRTRRPNKESDKLIVRRRRTGKNKR</sequence>
<name>RL2_PAEAT</name>
<feature type="chain" id="PRO_0000309867" description="Large ribosomal subunit protein uL2">
    <location>
        <begin position="1"/>
        <end position="279"/>
    </location>
</feature>
<feature type="region of interest" description="Disordered" evidence="2">
    <location>
        <begin position="29"/>
        <end position="59"/>
    </location>
</feature>
<feature type="region of interest" description="Disordered" evidence="2">
    <location>
        <begin position="224"/>
        <end position="279"/>
    </location>
</feature>
<feature type="compositionally biased region" description="Basic residues" evidence="2">
    <location>
        <begin position="50"/>
        <end position="59"/>
    </location>
</feature>
<feature type="compositionally biased region" description="Basic and acidic residues" evidence="2">
    <location>
        <begin position="253"/>
        <end position="268"/>
    </location>
</feature>
<feature type="compositionally biased region" description="Basic residues" evidence="2">
    <location>
        <begin position="269"/>
        <end position="279"/>
    </location>
</feature>
<comment type="function">
    <text evidence="1">One of the primary rRNA binding proteins. Required for association of the 30S and 50S subunits to form the 70S ribosome, for tRNA binding and peptide bond formation. It has been suggested to have peptidyltransferase activity; this is somewhat controversial. Makes several contacts with the 16S rRNA in the 70S ribosome.</text>
</comment>
<comment type="subunit">
    <text evidence="1">Part of the 50S ribosomal subunit. Forms a bridge to the 30S subunit in the 70S ribosome.</text>
</comment>
<comment type="similarity">
    <text evidence="1">Belongs to the universal ribosomal protein uL2 family.</text>
</comment>
<reference key="1">
    <citation type="journal article" date="2006" name="PLoS Genet.">
        <title>Secrets of soil survival revealed by the genome sequence of Arthrobacter aurescens TC1.</title>
        <authorList>
            <person name="Mongodin E.F."/>
            <person name="Shapir N."/>
            <person name="Daugherty S.C."/>
            <person name="DeBoy R.T."/>
            <person name="Emerson J.B."/>
            <person name="Shvartzbeyn A."/>
            <person name="Radune D."/>
            <person name="Vamathevan J."/>
            <person name="Riggs F."/>
            <person name="Grinberg V."/>
            <person name="Khouri H.M."/>
            <person name="Wackett L.P."/>
            <person name="Nelson K.E."/>
            <person name="Sadowsky M.J."/>
        </authorList>
    </citation>
    <scope>NUCLEOTIDE SEQUENCE [LARGE SCALE GENOMIC DNA]</scope>
    <source>
        <strain>TC1</strain>
    </source>
</reference>
<gene>
    <name evidence="1" type="primary">rplB</name>
    <name type="ordered locus">AAur_2945</name>
</gene>
<evidence type="ECO:0000255" key="1">
    <source>
        <dbReference type="HAMAP-Rule" id="MF_01320"/>
    </source>
</evidence>
<evidence type="ECO:0000256" key="2">
    <source>
        <dbReference type="SAM" id="MobiDB-lite"/>
    </source>
</evidence>
<evidence type="ECO:0000305" key="3"/>
<proteinExistence type="inferred from homology"/>
<keyword id="KW-0687">Ribonucleoprotein</keyword>
<keyword id="KW-0689">Ribosomal protein</keyword>
<keyword id="KW-0694">RNA-binding</keyword>
<keyword id="KW-0699">rRNA-binding</keyword>
<accession>A1R8U2</accession>
<dbReference type="EMBL" id="CP000474">
    <property type="protein sequence ID" value="ABM06831.1"/>
    <property type="molecule type" value="Genomic_DNA"/>
</dbReference>
<dbReference type="RefSeq" id="WP_011775592.1">
    <property type="nucleotide sequence ID" value="NC_008711.1"/>
</dbReference>
<dbReference type="SMR" id="A1R8U2"/>
<dbReference type="STRING" id="290340.AAur_2945"/>
<dbReference type="GeneID" id="97301789"/>
<dbReference type="KEGG" id="aau:AAur_2945"/>
<dbReference type="eggNOG" id="COG0090">
    <property type="taxonomic scope" value="Bacteria"/>
</dbReference>
<dbReference type="HOGENOM" id="CLU_036235_2_1_11"/>
<dbReference type="OrthoDB" id="9778722at2"/>
<dbReference type="Proteomes" id="UP000000637">
    <property type="component" value="Chromosome"/>
</dbReference>
<dbReference type="GO" id="GO:0015934">
    <property type="term" value="C:large ribosomal subunit"/>
    <property type="evidence" value="ECO:0007669"/>
    <property type="project" value="InterPro"/>
</dbReference>
<dbReference type="GO" id="GO:0019843">
    <property type="term" value="F:rRNA binding"/>
    <property type="evidence" value="ECO:0007669"/>
    <property type="project" value="UniProtKB-UniRule"/>
</dbReference>
<dbReference type="GO" id="GO:0003735">
    <property type="term" value="F:structural constituent of ribosome"/>
    <property type="evidence" value="ECO:0007669"/>
    <property type="project" value="InterPro"/>
</dbReference>
<dbReference type="GO" id="GO:0016740">
    <property type="term" value="F:transferase activity"/>
    <property type="evidence" value="ECO:0007669"/>
    <property type="project" value="InterPro"/>
</dbReference>
<dbReference type="GO" id="GO:0002181">
    <property type="term" value="P:cytoplasmic translation"/>
    <property type="evidence" value="ECO:0007669"/>
    <property type="project" value="TreeGrafter"/>
</dbReference>
<dbReference type="FunFam" id="2.30.30.30:FF:000001">
    <property type="entry name" value="50S ribosomal protein L2"/>
    <property type="match status" value="1"/>
</dbReference>
<dbReference type="FunFam" id="2.40.50.140:FF:000003">
    <property type="entry name" value="50S ribosomal protein L2"/>
    <property type="match status" value="1"/>
</dbReference>
<dbReference type="FunFam" id="4.10.950.10:FF:000001">
    <property type="entry name" value="50S ribosomal protein L2"/>
    <property type="match status" value="1"/>
</dbReference>
<dbReference type="Gene3D" id="2.30.30.30">
    <property type="match status" value="1"/>
</dbReference>
<dbReference type="Gene3D" id="2.40.50.140">
    <property type="entry name" value="Nucleic acid-binding proteins"/>
    <property type="match status" value="1"/>
</dbReference>
<dbReference type="Gene3D" id="4.10.950.10">
    <property type="entry name" value="Ribosomal protein L2, domain 3"/>
    <property type="match status" value="1"/>
</dbReference>
<dbReference type="HAMAP" id="MF_01320_B">
    <property type="entry name" value="Ribosomal_uL2_B"/>
    <property type="match status" value="1"/>
</dbReference>
<dbReference type="InterPro" id="IPR012340">
    <property type="entry name" value="NA-bd_OB-fold"/>
</dbReference>
<dbReference type="InterPro" id="IPR014722">
    <property type="entry name" value="Rib_uL2_dom2"/>
</dbReference>
<dbReference type="InterPro" id="IPR002171">
    <property type="entry name" value="Ribosomal_uL2"/>
</dbReference>
<dbReference type="InterPro" id="IPR005880">
    <property type="entry name" value="Ribosomal_uL2_bac/org-type"/>
</dbReference>
<dbReference type="InterPro" id="IPR022669">
    <property type="entry name" value="Ribosomal_uL2_C"/>
</dbReference>
<dbReference type="InterPro" id="IPR022671">
    <property type="entry name" value="Ribosomal_uL2_CS"/>
</dbReference>
<dbReference type="InterPro" id="IPR014726">
    <property type="entry name" value="Ribosomal_uL2_dom3"/>
</dbReference>
<dbReference type="InterPro" id="IPR022666">
    <property type="entry name" value="Ribosomal_uL2_RNA-bd_dom"/>
</dbReference>
<dbReference type="InterPro" id="IPR008991">
    <property type="entry name" value="Translation_prot_SH3-like_sf"/>
</dbReference>
<dbReference type="NCBIfam" id="TIGR01171">
    <property type="entry name" value="rplB_bact"/>
    <property type="match status" value="1"/>
</dbReference>
<dbReference type="PANTHER" id="PTHR13691:SF5">
    <property type="entry name" value="LARGE RIBOSOMAL SUBUNIT PROTEIN UL2M"/>
    <property type="match status" value="1"/>
</dbReference>
<dbReference type="PANTHER" id="PTHR13691">
    <property type="entry name" value="RIBOSOMAL PROTEIN L2"/>
    <property type="match status" value="1"/>
</dbReference>
<dbReference type="Pfam" id="PF00181">
    <property type="entry name" value="Ribosomal_L2"/>
    <property type="match status" value="1"/>
</dbReference>
<dbReference type="Pfam" id="PF03947">
    <property type="entry name" value="Ribosomal_L2_C"/>
    <property type="match status" value="1"/>
</dbReference>
<dbReference type="PIRSF" id="PIRSF002158">
    <property type="entry name" value="Ribosomal_L2"/>
    <property type="match status" value="1"/>
</dbReference>
<dbReference type="SMART" id="SM01383">
    <property type="entry name" value="Ribosomal_L2"/>
    <property type="match status" value="1"/>
</dbReference>
<dbReference type="SMART" id="SM01382">
    <property type="entry name" value="Ribosomal_L2_C"/>
    <property type="match status" value="1"/>
</dbReference>
<dbReference type="SUPFAM" id="SSF50249">
    <property type="entry name" value="Nucleic acid-binding proteins"/>
    <property type="match status" value="1"/>
</dbReference>
<dbReference type="SUPFAM" id="SSF50104">
    <property type="entry name" value="Translation proteins SH3-like domain"/>
    <property type="match status" value="1"/>
</dbReference>
<dbReference type="PROSITE" id="PS00467">
    <property type="entry name" value="RIBOSOMAL_L2"/>
    <property type="match status" value="1"/>
</dbReference>
<organism>
    <name type="scientific">Paenarthrobacter aurescens (strain TC1)</name>
    <dbReference type="NCBI Taxonomy" id="290340"/>
    <lineage>
        <taxon>Bacteria</taxon>
        <taxon>Bacillati</taxon>
        <taxon>Actinomycetota</taxon>
        <taxon>Actinomycetes</taxon>
        <taxon>Micrococcales</taxon>
        <taxon>Micrococcaceae</taxon>
        <taxon>Paenarthrobacter</taxon>
    </lineage>
</organism>
<protein>
    <recommendedName>
        <fullName evidence="1">Large ribosomal subunit protein uL2</fullName>
    </recommendedName>
    <alternativeName>
        <fullName evidence="3">50S ribosomal protein L2</fullName>
    </alternativeName>
</protein>